<evidence type="ECO:0000255" key="1"/>
<evidence type="ECO:0000305" key="2"/>
<keyword id="KW-1003">Cell membrane</keyword>
<keyword id="KW-0472">Membrane</keyword>
<keyword id="KW-1185">Reference proteome</keyword>
<keyword id="KW-0762">Sugar transport</keyword>
<keyword id="KW-0812">Transmembrane</keyword>
<keyword id="KW-1133">Transmembrane helix</keyword>
<keyword id="KW-0813">Transport</keyword>
<organism>
    <name type="scientific">Lactococcus lactis subsp. lactis (strain IL1403)</name>
    <name type="common">Streptococcus lactis</name>
    <dbReference type="NCBI Taxonomy" id="272623"/>
    <lineage>
        <taxon>Bacteria</taxon>
        <taxon>Bacillati</taxon>
        <taxon>Bacillota</taxon>
        <taxon>Bacilli</taxon>
        <taxon>Lactobacillales</taxon>
        <taxon>Streptococcaceae</taxon>
        <taxon>Lactococcus</taxon>
    </lineage>
</organism>
<name>YXFA_LACLA</name>
<protein>
    <recommendedName>
        <fullName>Putative sugar uptake protein YxfA</fullName>
    </recommendedName>
</protein>
<feature type="chain" id="PRO_0000213652" description="Putative sugar uptake protein YxfA">
    <location>
        <begin position="1"/>
        <end position="295"/>
    </location>
</feature>
<feature type="transmembrane region" description="Helical" evidence="1">
    <location>
        <begin position="4"/>
        <end position="26"/>
    </location>
</feature>
<feature type="transmembrane region" description="Helical" evidence="1">
    <location>
        <begin position="33"/>
        <end position="50"/>
    </location>
</feature>
<feature type="transmembrane region" description="Helical" evidence="1">
    <location>
        <begin position="54"/>
        <end position="72"/>
    </location>
</feature>
<feature type="transmembrane region" description="Helical" evidence="1">
    <location>
        <begin position="85"/>
        <end position="107"/>
    </location>
</feature>
<feature type="transmembrane region" description="Helical" evidence="1">
    <location>
        <begin position="117"/>
        <end position="135"/>
    </location>
</feature>
<feature type="transmembrane region" description="Helical" evidence="1">
    <location>
        <begin position="156"/>
        <end position="178"/>
    </location>
</feature>
<feature type="transmembrane region" description="Helical" evidence="1">
    <location>
        <begin position="188"/>
        <end position="206"/>
    </location>
</feature>
<feature type="transmembrane region" description="Helical" evidence="1">
    <location>
        <begin position="213"/>
        <end position="235"/>
    </location>
</feature>
<feature type="transmembrane region" description="Helical" evidence="1">
    <location>
        <begin position="241"/>
        <end position="263"/>
    </location>
</feature>
<feature type="transmembrane region" description="Helical" evidence="1">
    <location>
        <begin position="270"/>
        <end position="291"/>
    </location>
</feature>
<dbReference type="EMBL" id="AE005176">
    <property type="protein sequence ID" value="AAK06362.1"/>
    <property type="molecule type" value="Genomic_DNA"/>
</dbReference>
<dbReference type="PIR" id="H86907">
    <property type="entry name" value="H86907"/>
</dbReference>
<dbReference type="RefSeq" id="NP_268421.1">
    <property type="nucleotide sequence ID" value="NC_002662.1"/>
</dbReference>
<dbReference type="RefSeq" id="WP_010906424.1">
    <property type="nucleotide sequence ID" value="NC_002662.1"/>
</dbReference>
<dbReference type="TCDB" id="2.A.7.5.3">
    <property type="family name" value="the drug/metabolite transporter (dmt) superfamily"/>
</dbReference>
<dbReference type="PaxDb" id="272623-L140621"/>
<dbReference type="DNASU" id="1115942"/>
<dbReference type="EnsemblBacteria" id="AAK06362">
    <property type="protein sequence ID" value="AAK06362"/>
    <property type="gene ID" value="L140621"/>
</dbReference>
<dbReference type="KEGG" id="lla:L140621"/>
<dbReference type="PATRIC" id="fig|272623.7.peg.2429"/>
<dbReference type="eggNOG" id="COG4975">
    <property type="taxonomic scope" value="Bacteria"/>
</dbReference>
<dbReference type="HOGENOM" id="CLU_076024_0_0_9"/>
<dbReference type="OrthoDB" id="1452595at2"/>
<dbReference type="Proteomes" id="UP000002196">
    <property type="component" value="Chromosome"/>
</dbReference>
<dbReference type="GO" id="GO:0005886">
    <property type="term" value="C:plasma membrane"/>
    <property type="evidence" value="ECO:0007669"/>
    <property type="project" value="UniProtKB-SubCell"/>
</dbReference>
<dbReference type="GO" id="GO:0015144">
    <property type="term" value="F:carbohydrate transmembrane transporter activity"/>
    <property type="evidence" value="ECO:0007669"/>
    <property type="project" value="InterPro"/>
</dbReference>
<dbReference type="InterPro" id="IPR010651">
    <property type="entry name" value="Sugar_transport"/>
</dbReference>
<dbReference type="PANTHER" id="PTHR16119">
    <property type="entry name" value="TRANSMEMBRANE PROTEIN 144"/>
    <property type="match status" value="1"/>
</dbReference>
<dbReference type="PANTHER" id="PTHR16119:SF17">
    <property type="entry name" value="TRANSMEMBRANE PROTEIN 144"/>
    <property type="match status" value="1"/>
</dbReference>
<dbReference type="Pfam" id="PF06800">
    <property type="entry name" value="Sugar_transport"/>
    <property type="match status" value="1"/>
</dbReference>
<dbReference type="SUPFAM" id="SSF103481">
    <property type="entry name" value="Multidrug resistance efflux transporter EmrE"/>
    <property type="match status" value="1"/>
</dbReference>
<gene>
    <name type="primary">yxfA</name>
    <name type="ordered locus">LL2264</name>
    <name type="ORF">L140621</name>
</gene>
<sequence>MQGVLLALVPMFAWGSIGFVANKFGGDAKQQTLGMTLGAFVFALIVFLFRMPTLTWQIFLIGFIGGLLWAIGQFGQFNSMKYMGVSVASPLSSGSQLVIGGLIGVFAFHEWTKQIQFILGFIAMAVLVVGFYFSAKRDPENAVVEEGRNYTKGLTALTYSTLGYVIYVILFNNLAVLWFNVHFDTLTIILPMSVGMIFGALVMGRFKIKMEKYVYQNMIVGAMWGVGNIFMLMAASAAGNAIAFSFSQLGVIVSTIGGILFLGEKKTKKELVYVGIGIVLFVTGAILLAIVKSKG</sequence>
<proteinExistence type="inferred from homology"/>
<reference key="1">
    <citation type="journal article" date="2001" name="Genome Res.">
        <title>The complete genome sequence of the lactic acid bacterium Lactococcus lactis ssp. lactis IL1403.</title>
        <authorList>
            <person name="Bolotin A."/>
            <person name="Wincker P."/>
            <person name="Mauger S."/>
            <person name="Jaillon O."/>
            <person name="Malarme K."/>
            <person name="Weissenbach J."/>
            <person name="Ehrlich S.D."/>
            <person name="Sorokin A."/>
        </authorList>
    </citation>
    <scope>NUCLEOTIDE SEQUENCE [LARGE SCALE GENOMIC DNA]</scope>
    <source>
        <strain>IL1403</strain>
    </source>
</reference>
<comment type="subcellular location">
    <subcellularLocation>
        <location evidence="2">Cell membrane</location>
        <topology evidence="2">Multi-pass membrane protein</topology>
    </subcellularLocation>
</comment>
<comment type="similarity">
    <text evidence="2">Belongs to the GRP transporter (TC 2.A.7.5) family.</text>
</comment>
<accession>Q9CDF7</accession>